<gene>
    <name evidence="1" type="primary">xpt</name>
    <name type="ordered locus">PEPE_1374</name>
</gene>
<reference key="1">
    <citation type="journal article" date="2006" name="Proc. Natl. Acad. Sci. U.S.A.">
        <title>Comparative genomics of the lactic acid bacteria.</title>
        <authorList>
            <person name="Makarova K.S."/>
            <person name="Slesarev A."/>
            <person name="Wolf Y.I."/>
            <person name="Sorokin A."/>
            <person name="Mirkin B."/>
            <person name="Koonin E.V."/>
            <person name="Pavlov A."/>
            <person name="Pavlova N."/>
            <person name="Karamychev V."/>
            <person name="Polouchine N."/>
            <person name="Shakhova V."/>
            <person name="Grigoriev I."/>
            <person name="Lou Y."/>
            <person name="Rohksar D."/>
            <person name="Lucas S."/>
            <person name="Huang K."/>
            <person name="Goodstein D.M."/>
            <person name="Hawkins T."/>
            <person name="Plengvidhya V."/>
            <person name="Welker D."/>
            <person name="Hughes J."/>
            <person name="Goh Y."/>
            <person name="Benson A."/>
            <person name="Baldwin K."/>
            <person name="Lee J.-H."/>
            <person name="Diaz-Muniz I."/>
            <person name="Dosti B."/>
            <person name="Smeianov V."/>
            <person name="Wechter W."/>
            <person name="Barabote R."/>
            <person name="Lorca G."/>
            <person name="Altermann E."/>
            <person name="Barrangou R."/>
            <person name="Ganesan B."/>
            <person name="Xie Y."/>
            <person name="Rawsthorne H."/>
            <person name="Tamir D."/>
            <person name="Parker C."/>
            <person name="Breidt F."/>
            <person name="Broadbent J.R."/>
            <person name="Hutkins R."/>
            <person name="O'Sullivan D."/>
            <person name="Steele J."/>
            <person name="Unlu G."/>
            <person name="Saier M.H. Jr."/>
            <person name="Klaenhammer T."/>
            <person name="Richardson P."/>
            <person name="Kozyavkin S."/>
            <person name="Weimer B.C."/>
            <person name="Mills D.A."/>
        </authorList>
    </citation>
    <scope>NUCLEOTIDE SEQUENCE [LARGE SCALE GENOMIC DNA]</scope>
    <source>
        <strain>ATCC 25745 / CCUG 21536 / LMG 10740 / 183-1w</strain>
    </source>
</reference>
<keyword id="KW-0963">Cytoplasm</keyword>
<keyword id="KW-0328">Glycosyltransferase</keyword>
<keyword id="KW-0660">Purine salvage</keyword>
<keyword id="KW-0808">Transferase</keyword>
<name>XPT_PEDPA</name>
<accession>Q03EG0</accession>
<proteinExistence type="inferred from homology"/>
<sequence>MKLLEDKIKSEGIVLPNNVLKVDGFLNHQVDAQLMFEIGKEFGRLFKKQNVTKILTVESSGIAPAVMTGLAMDVPVVFARKHKSLTLTDDLYTASVYSYTKQTSNQISISKRFIDEKDRVLIIDDFLANGQAVSGLLDIADAANIDVVGVGIVIEKTFQKGSQIIKDRDIQLESLARIKALTDDGQVEFE</sequence>
<organism>
    <name type="scientific">Pediococcus pentosaceus (strain ATCC 25745 / CCUG 21536 / LMG 10740 / 183-1w)</name>
    <dbReference type="NCBI Taxonomy" id="278197"/>
    <lineage>
        <taxon>Bacteria</taxon>
        <taxon>Bacillati</taxon>
        <taxon>Bacillota</taxon>
        <taxon>Bacilli</taxon>
        <taxon>Lactobacillales</taxon>
        <taxon>Lactobacillaceae</taxon>
        <taxon>Pediococcus</taxon>
    </lineage>
</organism>
<feature type="chain" id="PRO_0000339725" description="Xanthine phosphoribosyltransferase">
    <location>
        <begin position="1"/>
        <end position="190"/>
    </location>
</feature>
<feature type="binding site" evidence="1">
    <location>
        <position position="20"/>
    </location>
    <ligand>
        <name>xanthine</name>
        <dbReference type="ChEBI" id="CHEBI:17712"/>
    </ligand>
</feature>
<feature type="binding site" evidence="1">
    <location>
        <position position="27"/>
    </location>
    <ligand>
        <name>xanthine</name>
        <dbReference type="ChEBI" id="CHEBI:17712"/>
    </ligand>
</feature>
<feature type="binding site" evidence="1">
    <location>
        <begin position="128"/>
        <end position="132"/>
    </location>
    <ligand>
        <name>5-phospho-alpha-D-ribose 1-diphosphate</name>
        <dbReference type="ChEBI" id="CHEBI:58017"/>
    </ligand>
</feature>
<feature type="binding site" evidence="1">
    <location>
        <position position="156"/>
    </location>
    <ligand>
        <name>xanthine</name>
        <dbReference type="ChEBI" id="CHEBI:17712"/>
    </ligand>
</feature>
<evidence type="ECO:0000255" key="1">
    <source>
        <dbReference type="HAMAP-Rule" id="MF_01184"/>
    </source>
</evidence>
<comment type="function">
    <text evidence="1">Converts the preformed base xanthine, a product of nucleic acid breakdown, to xanthosine 5'-monophosphate (XMP), so it can be reused for RNA or DNA synthesis.</text>
</comment>
<comment type="catalytic activity">
    <reaction evidence="1">
        <text>XMP + diphosphate = xanthine + 5-phospho-alpha-D-ribose 1-diphosphate</text>
        <dbReference type="Rhea" id="RHEA:10800"/>
        <dbReference type="ChEBI" id="CHEBI:17712"/>
        <dbReference type="ChEBI" id="CHEBI:33019"/>
        <dbReference type="ChEBI" id="CHEBI:57464"/>
        <dbReference type="ChEBI" id="CHEBI:58017"/>
        <dbReference type="EC" id="2.4.2.22"/>
    </reaction>
</comment>
<comment type="pathway">
    <text evidence="1">Purine metabolism; XMP biosynthesis via salvage pathway; XMP from xanthine: step 1/1.</text>
</comment>
<comment type="subunit">
    <text evidence="1">Homodimer.</text>
</comment>
<comment type="subcellular location">
    <subcellularLocation>
        <location evidence="1">Cytoplasm</location>
    </subcellularLocation>
</comment>
<comment type="similarity">
    <text evidence="1">Belongs to the purine/pyrimidine phosphoribosyltransferase family. Xpt subfamily.</text>
</comment>
<protein>
    <recommendedName>
        <fullName evidence="1">Xanthine phosphoribosyltransferase</fullName>
        <shortName evidence="1">XPRTase</shortName>
        <ecNumber evidence="1">2.4.2.22</ecNumber>
    </recommendedName>
</protein>
<dbReference type="EC" id="2.4.2.22" evidence="1"/>
<dbReference type="EMBL" id="CP000422">
    <property type="protein sequence ID" value="ABJ68412.1"/>
    <property type="molecule type" value="Genomic_DNA"/>
</dbReference>
<dbReference type="RefSeq" id="WP_011673640.1">
    <property type="nucleotide sequence ID" value="NC_008525.1"/>
</dbReference>
<dbReference type="SMR" id="Q03EG0"/>
<dbReference type="STRING" id="278197.PEPE_1374"/>
<dbReference type="GeneID" id="33061304"/>
<dbReference type="KEGG" id="ppe:PEPE_1374"/>
<dbReference type="eggNOG" id="COG0503">
    <property type="taxonomic scope" value="Bacteria"/>
</dbReference>
<dbReference type="HOGENOM" id="CLU_099015_0_0_9"/>
<dbReference type="OrthoDB" id="9790678at2"/>
<dbReference type="UniPathway" id="UPA00602">
    <property type="reaction ID" value="UER00658"/>
</dbReference>
<dbReference type="Proteomes" id="UP000000773">
    <property type="component" value="Chromosome"/>
</dbReference>
<dbReference type="GO" id="GO:0005737">
    <property type="term" value="C:cytoplasm"/>
    <property type="evidence" value="ECO:0007669"/>
    <property type="project" value="UniProtKB-SubCell"/>
</dbReference>
<dbReference type="GO" id="GO:0000310">
    <property type="term" value="F:xanthine phosphoribosyltransferase activity"/>
    <property type="evidence" value="ECO:0007669"/>
    <property type="project" value="UniProtKB-UniRule"/>
</dbReference>
<dbReference type="GO" id="GO:0006166">
    <property type="term" value="P:purine ribonucleoside salvage"/>
    <property type="evidence" value="ECO:0007669"/>
    <property type="project" value="UniProtKB-KW"/>
</dbReference>
<dbReference type="GO" id="GO:0046110">
    <property type="term" value="P:xanthine metabolic process"/>
    <property type="evidence" value="ECO:0007669"/>
    <property type="project" value="InterPro"/>
</dbReference>
<dbReference type="GO" id="GO:0032265">
    <property type="term" value="P:XMP salvage"/>
    <property type="evidence" value="ECO:0007669"/>
    <property type="project" value="UniProtKB-UniRule"/>
</dbReference>
<dbReference type="CDD" id="cd06223">
    <property type="entry name" value="PRTases_typeI"/>
    <property type="match status" value="1"/>
</dbReference>
<dbReference type="Gene3D" id="3.40.50.2020">
    <property type="match status" value="1"/>
</dbReference>
<dbReference type="HAMAP" id="MF_01184">
    <property type="entry name" value="XPRTase"/>
    <property type="match status" value="1"/>
</dbReference>
<dbReference type="InterPro" id="IPR000836">
    <property type="entry name" value="PRibTrfase_dom"/>
</dbReference>
<dbReference type="InterPro" id="IPR029057">
    <property type="entry name" value="PRTase-like"/>
</dbReference>
<dbReference type="InterPro" id="IPR050118">
    <property type="entry name" value="Pur/Pyrimidine_PRTase"/>
</dbReference>
<dbReference type="InterPro" id="IPR010079">
    <property type="entry name" value="Xanthine_PRibTrfase"/>
</dbReference>
<dbReference type="NCBIfam" id="NF006671">
    <property type="entry name" value="PRK09219.1"/>
    <property type="match status" value="1"/>
</dbReference>
<dbReference type="NCBIfam" id="TIGR01744">
    <property type="entry name" value="XPRTase"/>
    <property type="match status" value="1"/>
</dbReference>
<dbReference type="PANTHER" id="PTHR43864">
    <property type="entry name" value="HYPOXANTHINE/GUANINE PHOSPHORIBOSYLTRANSFERASE"/>
    <property type="match status" value="1"/>
</dbReference>
<dbReference type="PANTHER" id="PTHR43864:SF1">
    <property type="entry name" value="XANTHINE PHOSPHORIBOSYLTRANSFERASE"/>
    <property type="match status" value="1"/>
</dbReference>
<dbReference type="SUPFAM" id="SSF53271">
    <property type="entry name" value="PRTase-like"/>
    <property type="match status" value="1"/>
</dbReference>